<proteinExistence type="inferred from homology"/>
<protein>
    <recommendedName>
        <fullName evidence="1">UPF0210 protein LAF_0976</fullName>
    </recommendedName>
</protein>
<keyword id="KW-1185">Reference proteome</keyword>
<sequence length="447" mass="46472">MEIEKIQETIRMIADENLDVRTITMGISLLDCIDSDSDRACQKIYDKITTKAQDLVKVGRQIEAEFGLPIVNKRVTVTPIALIAAASGDADYVKYAKTLDRAAHAVGIDFIGGFSALTQKGYQSGDRVLINSLPQALAETELVCASVNVGSTRSGINMDAVKDMGTVIKRASELDLMANAKLVVFCNAVEDNPFMAGGFHGVSEPDVVINAGVSGPGVVKAALEKVKGQPMDVVAETIKQTAFKVTRMGQLVGTIAAQRLGVPFGIVDLSLAPTPAIGDSVAQILEEIGLEQVGTHGTTAALAMLNDAVKKGGIMACSHVGGLSGAFIPVSEDAGMIDAVNAHTLSLDKLEAMTAVCSVGLDMIAIPGDTPAETISAMIADEAAIGMINNKTTAVRVIPVAGKQVGETVEFGGLLGHAPIMGVNKASSAAMIHRGGQLPAPVHSFKN</sequence>
<evidence type="ECO:0000255" key="1">
    <source>
        <dbReference type="HAMAP-Rule" id="MF_01221"/>
    </source>
</evidence>
<comment type="subunit">
    <text evidence="1">Homodimer.</text>
</comment>
<comment type="similarity">
    <text evidence="1">Belongs to the UPF0210 family.</text>
</comment>
<feature type="chain" id="PRO_1000139228" description="UPF0210 protein LAF_0976">
    <location>
        <begin position="1"/>
        <end position="447"/>
    </location>
</feature>
<gene>
    <name type="ordered locus">LAF_0976</name>
</gene>
<accession>B2GCD0</accession>
<reference key="1">
    <citation type="journal article" date="2008" name="DNA Res.">
        <title>Comparative genome analysis of Lactobacillus reuteri and Lactobacillus fermentum reveal a genomic island for reuterin and cobalamin production.</title>
        <authorList>
            <person name="Morita H."/>
            <person name="Toh H."/>
            <person name="Fukuda S."/>
            <person name="Horikawa H."/>
            <person name="Oshima K."/>
            <person name="Suzuki T."/>
            <person name="Murakami M."/>
            <person name="Hisamatsu S."/>
            <person name="Kato Y."/>
            <person name="Takizawa T."/>
            <person name="Fukuoka H."/>
            <person name="Yoshimura T."/>
            <person name="Itoh K."/>
            <person name="O'Sullivan D.J."/>
            <person name="McKay L.L."/>
            <person name="Ohno H."/>
            <person name="Kikuchi J."/>
            <person name="Masaoka T."/>
            <person name="Hattori M."/>
        </authorList>
    </citation>
    <scope>NUCLEOTIDE SEQUENCE [LARGE SCALE GENOMIC DNA]</scope>
    <source>
        <strain>NBRC 3956 / LMG 18251</strain>
    </source>
</reference>
<name>Y976_LIMF3</name>
<organism>
    <name type="scientific">Limosilactobacillus fermentum (strain NBRC 3956 / LMG 18251)</name>
    <name type="common">Lactobacillus fermentum</name>
    <dbReference type="NCBI Taxonomy" id="334390"/>
    <lineage>
        <taxon>Bacteria</taxon>
        <taxon>Bacillati</taxon>
        <taxon>Bacillota</taxon>
        <taxon>Bacilli</taxon>
        <taxon>Lactobacillales</taxon>
        <taxon>Lactobacillaceae</taxon>
        <taxon>Limosilactobacillus</taxon>
    </lineage>
</organism>
<dbReference type="EMBL" id="AP008937">
    <property type="protein sequence ID" value="BAG27312.1"/>
    <property type="molecule type" value="Genomic_DNA"/>
</dbReference>
<dbReference type="RefSeq" id="WP_012391260.1">
    <property type="nucleotide sequence ID" value="NC_010610.1"/>
</dbReference>
<dbReference type="SMR" id="B2GCD0"/>
<dbReference type="KEGG" id="lfe:LAF_0976"/>
<dbReference type="eggNOG" id="COG2848">
    <property type="taxonomic scope" value="Bacteria"/>
</dbReference>
<dbReference type="HOGENOM" id="CLU_048704_0_0_9"/>
<dbReference type="Proteomes" id="UP000001697">
    <property type="component" value="Chromosome"/>
</dbReference>
<dbReference type="CDD" id="cd08025">
    <property type="entry name" value="RNR_PFL_like_DUF711"/>
    <property type="match status" value="1"/>
</dbReference>
<dbReference type="Gene3D" id="3.20.70.20">
    <property type="match status" value="1"/>
</dbReference>
<dbReference type="HAMAP" id="MF_01221">
    <property type="entry name" value="UPF0210"/>
    <property type="match status" value="1"/>
</dbReference>
<dbReference type="InterPro" id="IPR007841">
    <property type="entry name" value="UPF0210"/>
</dbReference>
<dbReference type="NCBIfam" id="NF003700">
    <property type="entry name" value="PRK05313.1"/>
    <property type="match status" value="1"/>
</dbReference>
<dbReference type="PANTHER" id="PTHR37560:SF1">
    <property type="entry name" value="UPF0210 PROTEIN MJ1665"/>
    <property type="match status" value="1"/>
</dbReference>
<dbReference type="PANTHER" id="PTHR37560">
    <property type="entry name" value="UPF0210 PROTEIN SPR0218"/>
    <property type="match status" value="1"/>
</dbReference>
<dbReference type="Pfam" id="PF05167">
    <property type="entry name" value="DUF711"/>
    <property type="match status" value="1"/>
</dbReference>
<dbReference type="SUPFAM" id="SSF51998">
    <property type="entry name" value="PFL-like glycyl radical enzymes"/>
    <property type="match status" value="1"/>
</dbReference>